<accession>Q2P1A2</accession>
<proteinExistence type="inferred from homology"/>
<feature type="chain" id="PRO_0000231480" description="Putative pterin-4-alpha-carbinolamine dehydratase">
    <location>
        <begin position="1"/>
        <end position="118"/>
    </location>
</feature>
<sequence length="118" mass="13255">MTDLIPLEQAHCLPRKGSDHKLGEARLAELLPQVPGWELAEAGMALTRTFRFADYYHTLAFVNALAWIAHREDHHPDLGVHYDRVVVRYSTHDVGGLSENDFICAAKTARLYDQGITA</sequence>
<protein>
    <recommendedName>
        <fullName evidence="1">Putative pterin-4-alpha-carbinolamine dehydratase</fullName>
        <shortName evidence="1">PHS</shortName>
        <ecNumber evidence="1">4.2.1.96</ecNumber>
    </recommendedName>
    <alternativeName>
        <fullName evidence="1">4-alpha-hydroxy-tetrahydropterin dehydratase</fullName>
    </alternativeName>
    <alternativeName>
        <fullName evidence="1">Pterin carbinolamine dehydratase</fullName>
        <shortName evidence="1">PCD</shortName>
    </alternativeName>
</protein>
<name>PHS_XANOM</name>
<dbReference type="EC" id="4.2.1.96" evidence="1"/>
<dbReference type="EMBL" id="AP008229">
    <property type="protein sequence ID" value="BAE69675.1"/>
    <property type="molecule type" value="Genomic_DNA"/>
</dbReference>
<dbReference type="RefSeq" id="WP_011408966.1">
    <property type="nucleotide sequence ID" value="NC_007705.1"/>
</dbReference>
<dbReference type="SMR" id="Q2P1A2"/>
<dbReference type="KEGG" id="xom:XOO2920"/>
<dbReference type="HOGENOM" id="CLU_081974_2_1_6"/>
<dbReference type="GO" id="GO:0008124">
    <property type="term" value="F:4-alpha-hydroxytetrahydrobiopterin dehydratase activity"/>
    <property type="evidence" value="ECO:0007669"/>
    <property type="project" value="UniProtKB-UniRule"/>
</dbReference>
<dbReference type="GO" id="GO:0006729">
    <property type="term" value="P:tetrahydrobiopterin biosynthetic process"/>
    <property type="evidence" value="ECO:0007669"/>
    <property type="project" value="InterPro"/>
</dbReference>
<dbReference type="CDD" id="cd00913">
    <property type="entry name" value="PCD_DCoH_subfamily_a"/>
    <property type="match status" value="1"/>
</dbReference>
<dbReference type="Gene3D" id="3.30.1360.20">
    <property type="entry name" value="Transcriptional coactivator/pterin dehydratase"/>
    <property type="match status" value="1"/>
</dbReference>
<dbReference type="HAMAP" id="MF_00434">
    <property type="entry name" value="Pterin_4_alpha"/>
    <property type="match status" value="1"/>
</dbReference>
<dbReference type="InterPro" id="IPR036428">
    <property type="entry name" value="PCD_sf"/>
</dbReference>
<dbReference type="InterPro" id="IPR001533">
    <property type="entry name" value="Pterin_deHydtase"/>
</dbReference>
<dbReference type="NCBIfam" id="NF002019">
    <property type="entry name" value="PRK00823.1-4"/>
    <property type="match status" value="1"/>
</dbReference>
<dbReference type="PANTHER" id="PTHR12599">
    <property type="entry name" value="PTERIN-4-ALPHA-CARBINOLAMINE DEHYDRATASE"/>
    <property type="match status" value="1"/>
</dbReference>
<dbReference type="PANTHER" id="PTHR12599:SF0">
    <property type="entry name" value="PTERIN-4-ALPHA-CARBINOLAMINE DEHYDRATASE"/>
    <property type="match status" value="1"/>
</dbReference>
<dbReference type="Pfam" id="PF01329">
    <property type="entry name" value="Pterin_4a"/>
    <property type="match status" value="1"/>
</dbReference>
<dbReference type="SUPFAM" id="SSF55248">
    <property type="entry name" value="PCD-like"/>
    <property type="match status" value="1"/>
</dbReference>
<reference key="1">
    <citation type="journal article" date="2005" name="Jpn. Agric. Res. Q.">
        <title>Genome sequence of Xanthomonas oryzae pv. oryzae suggests contribution of large numbers of effector genes and insertion sequences to its race diversity.</title>
        <authorList>
            <person name="Ochiai H."/>
            <person name="Inoue Y."/>
            <person name="Takeya M."/>
            <person name="Sasaki A."/>
            <person name="Kaku H."/>
        </authorList>
    </citation>
    <scope>NUCLEOTIDE SEQUENCE [LARGE SCALE GENOMIC DNA]</scope>
    <source>
        <strain>MAFF 311018</strain>
    </source>
</reference>
<gene>
    <name type="ordered locus">XOO2920</name>
</gene>
<evidence type="ECO:0000255" key="1">
    <source>
        <dbReference type="HAMAP-Rule" id="MF_00434"/>
    </source>
</evidence>
<keyword id="KW-0456">Lyase</keyword>
<organism>
    <name type="scientific">Xanthomonas oryzae pv. oryzae (strain MAFF 311018)</name>
    <dbReference type="NCBI Taxonomy" id="342109"/>
    <lineage>
        <taxon>Bacteria</taxon>
        <taxon>Pseudomonadati</taxon>
        <taxon>Pseudomonadota</taxon>
        <taxon>Gammaproteobacteria</taxon>
        <taxon>Lysobacterales</taxon>
        <taxon>Lysobacteraceae</taxon>
        <taxon>Xanthomonas</taxon>
    </lineage>
</organism>
<comment type="catalytic activity">
    <reaction evidence="1">
        <text>(4aS,6R)-4a-hydroxy-L-erythro-5,6,7,8-tetrahydrobiopterin = (6R)-L-erythro-6,7-dihydrobiopterin + H2O</text>
        <dbReference type="Rhea" id="RHEA:11920"/>
        <dbReference type="ChEBI" id="CHEBI:15377"/>
        <dbReference type="ChEBI" id="CHEBI:15642"/>
        <dbReference type="ChEBI" id="CHEBI:43120"/>
        <dbReference type="EC" id="4.2.1.96"/>
    </reaction>
</comment>
<comment type="similarity">
    <text evidence="1">Belongs to the pterin-4-alpha-carbinolamine dehydratase family.</text>
</comment>